<sequence length="368" mass="41304">MTGKGCIIELKNVSKIFEDTCALDNINLQIANGEFLTLLGPSGCGKTTILRIISGFETPDVGEILIAGVNVSGFPPERRQVNTVFQHYALFPHMTVRDNVAFGLRMQKCPREKVNELVFEALRMVHLENFADRRPSQLSGGQQQRVAIARAVVNKPLLLLLDEPFSALDHKLRQIMQLEIKHLQRKLGITFVFVTHDQEEAFAMSDRVVVMNQGRIEQIGTPQCIYEEPVNLFVARFVGEINNLAGTILSCNDEGIYEAAIANEVFPLRTPHRFSPGEAVNVLLRPEDIRIYLLDEEVLKVPHLRGRIEETVYKGATVDIIIALDVGGTLRVAEFFNEDDAEISYNEGERVAVTWVDGWEVVLPHEMA</sequence>
<organism>
    <name type="scientific">Lawsonia intracellularis (strain PHE/MN1-00)</name>
    <dbReference type="NCBI Taxonomy" id="363253"/>
    <lineage>
        <taxon>Bacteria</taxon>
        <taxon>Pseudomonadati</taxon>
        <taxon>Thermodesulfobacteriota</taxon>
        <taxon>Desulfovibrionia</taxon>
        <taxon>Desulfovibrionales</taxon>
        <taxon>Desulfovibrionaceae</taxon>
        <taxon>Lawsonia</taxon>
    </lineage>
</organism>
<reference key="1">
    <citation type="submission" date="2005-11" db="EMBL/GenBank/DDBJ databases">
        <title>The complete genome sequence of Lawsonia intracellularis: the causative agent of proliferative enteropathy.</title>
        <authorList>
            <person name="Kaur K."/>
            <person name="Zhang Q."/>
            <person name="Beckler D."/>
            <person name="Munir S."/>
            <person name="Li L."/>
            <person name="Kinsley K."/>
            <person name="Herron L."/>
            <person name="Peterson A."/>
            <person name="May B."/>
            <person name="Singh S."/>
            <person name="Gebhart C."/>
            <person name="Kapur V."/>
        </authorList>
    </citation>
    <scope>NUCLEOTIDE SEQUENCE [LARGE SCALE GENOMIC DNA]</scope>
    <source>
        <strain>PHE/MN1-00</strain>
    </source>
</reference>
<comment type="function">
    <text evidence="1">Part of the ABC transporter complex PotABCD involved in spermidine/putrescine import. Responsible for energy coupling to the transport system.</text>
</comment>
<comment type="catalytic activity">
    <reaction evidence="1">
        <text>ATP + H2O + polyamine-[polyamine-binding protein]Side 1 = ADP + phosphate + polyamineSide 2 + [polyamine-binding protein]Side 1.</text>
        <dbReference type="EC" id="7.6.2.11"/>
    </reaction>
</comment>
<comment type="subunit">
    <text evidence="1">The complex is composed of two ATP-binding proteins (PotA), two transmembrane proteins (PotB and PotC) and a solute-binding protein (PotD).</text>
</comment>
<comment type="subcellular location">
    <subcellularLocation>
        <location evidence="1">Cell membrane</location>
        <topology evidence="1">Peripheral membrane protein</topology>
    </subcellularLocation>
</comment>
<comment type="similarity">
    <text evidence="1">Belongs to the ABC transporter superfamily. Spermidine/putrescine importer (TC 3.A.1.11.1) family.</text>
</comment>
<accession>Q1MQ44</accession>
<name>POTA_LAWIP</name>
<protein>
    <recommendedName>
        <fullName evidence="1">Spermidine/putrescine import ATP-binding protein PotA</fullName>
        <ecNumber evidence="1">7.6.2.11</ecNumber>
    </recommendedName>
</protein>
<dbReference type="EC" id="7.6.2.11" evidence="1"/>
<dbReference type="EMBL" id="AM180252">
    <property type="protein sequence ID" value="CAJ54883.1"/>
    <property type="molecule type" value="Genomic_DNA"/>
</dbReference>
<dbReference type="RefSeq" id="WP_011526912.1">
    <property type="nucleotide sequence ID" value="NC_008011.1"/>
</dbReference>
<dbReference type="SMR" id="Q1MQ44"/>
<dbReference type="STRING" id="363253.LI0829"/>
<dbReference type="KEGG" id="lip:LI0829"/>
<dbReference type="eggNOG" id="COG3842">
    <property type="taxonomic scope" value="Bacteria"/>
</dbReference>
<dbReference type="HOGENOM" id="CLU_000604_1_1_7"/>
<dbReference type="OrthoDB" id="9809450at2"/>
<dbReference type="Proteomes" id="UP000002430">
    <property type="component" value="Chromosome"/>
</dbReference>
<dbReference type="GO" id="GO:0043190">
    <property type="term" value="C:ATP-binding cassette (ABC) transporter complex"/>
    <property type="evidence" value="ECO:0007669"/>
    <property type="project" value="InterPro"/>
</dbReference>
<dbReference type="GO" id="GO:0015594">
    <property type="term" value="F:ABC-type putrescine transporter activity"/>
    <property type="evidence" value="ECO:0007669"/>
    <property type="project" value="InterPro"/>
</dbReference>
<dbReference type="GO" id="GO:0005524">
    <property type="term" value="F:ATP binding"/>
    <property type="evidence" value="ECO:0007669"/>
    <property type="project" value="UniProtKB-KW"/>
</dbReference>
<dbReference type="GO" id="GO:0016887">
    <property type="term" value="F:ATP hydrolysis activity"/>
    <property type="evidence" value="ECO:0007669"/>
    <property type="project" value="InterPro"/>
</dbReference>
<dbReference type="CDD" id="cd03300">
    <property type="entry name" value="ABC_PotA_N"/>
    <property type="match status" value="1"/>
</dbReference>
<dbReference type="FunFam" id="3.40.50.300:FF:000133">
    <property type="entry name" value="Spermidine/putrescine import ATP-binding protein PotA"/>
    <property type="match status" value="1"/>
</dbReference>
<dbReference type="Gene3D" id="2.40.50.100">
    <property type="match status" value="1"/>
</dbReference>
<dbReference type="Gene3D" id="3.40.50.300">
    <property type="entry name" value="P-loop containing nucleotide triphosphate hydrolases"/>
    <property type="match status" value="1"/>
</dbReference>
<dbReference type="InterPro" id="IPR003593">
    <property type="entry name" value="AAA+_ATPase"/>
</dbReference>
<dbReference type="InterPro" id="IPR050093">
    <property type="entry name" value="ABC_SmlMolc_Importer"/>
</dbReference>
<dbReference type="InterPro" id="IPR003439">
    <property type="entry name" value="ABC_transporter-like_ATP-bd"/>
</dbReference>
<dbReference type="InterPro" id="IPR017871">
    <property type="entry name" value="ABC_transporter-like_CS"/>
</dbReference>
<dbReference type="InterPro" id="IPR008995">
    <property type="entry name" value="Mo/tungstate-bd_C_term_dom"/>
</dbReference>
<dbReference type="InterPro" id="IPR027417">
    <property type="entry name" value="P-loop_NTPase"/>
</dbReference>
<dbReference type="InterPro" id="IPR005893">
    <property type="entry name" value="PotA-like"/>
</dbReference>
<dbReference type="InterPro" id="IPR017879">
    <property type="entry name" value="PotA_ATP-bd"/>
</dbReference>
<dbReference type="InterPro" id="IPR013611">
    <property type="entry name" value="Transp-assoc_OB_typ2"/>
</dbReference>
<dbReference type="NCBIfam" id="TIGR01187">
    <property type="entry name" value="potA"/>
    <property type="match status" value="1"/>
</dbReference>
<dbReference type="NCBIfam" id="NF006987">
    <property type="entry name" value="PRK09452.1"/>
    <property type="match status" value="1"/>
</dbReference>
<dbReference type="PANTHER" id="PTHR42781">
    <property type="entry name" value="SPERMIDINE/PUTRESCINE IMPORT ATP-BINDING PROTEIN POTA"/>
    <property type="match status" value="1"/>
</dbReference>
<dbReference type="PANTHER" id="PTHR42781:SF4">
    <property type="entry name" value="SPERMIDINE_PUTRESCINE IMPORT ATP-BINDING PROTEIN POTA"/>
    <property type="match status" value="1"/>
</dbReference>
<dbReference type="Pfam" id="PF00005">
    <property type="entry name" value="ABC_tran"/>
    <property type="match status" value="1"/>
</dbReference>
<dbReference type="Pfam" id="PF08402">
    <property type="entry name" value="TOBE_2"/>
    <property type="match status" value="1"/>
</dbReference>
<dbReference type="SMART" id="SM00382">
    <property type="entry name" value="AAA"/>
    <property type="match status" value="1"/>
</dbReference>
<dbReference type="SUPFAM" id="SSF50331">
    <property type="entry name" value="MOP-like"/>
    <property type="match status" value="1"/>
</dbReference>
<dbReference type="SUPFAM" id="SSF52540">
    <property type="entry name" value="P-loop containing nucleoside triphosphate hydrolases"/>
    <property type="match status" value="1"/>
</dbReference>
<dbReference type="PROSITE" id="PS00211">
    <property type="entry name" value="ABC_TRANSPORTER_1"/>
    <property type="match status" value="1"/>
</dbReference>
<dbReference type="PROSITE" id="PS50893">
    <property type="entry name" value="ABC_TRANSPORTER_2"/>
    <property type="match status" value="1"/>
</dbReference>
<dbReference type="PROSITE" id="PS51305">
    <property type="entry name" value="POTA"/>
    <property type="match status" value="1"/>
</dbReference>
<feature type="chain" id="PRO_0000286238" description="Spermidine/putrescine import ATP-binding protein PotA">
    <location>
        <begin position="1"/>
        <end position="368"/>
    </location>
</feature>
<feature type="domain" description="ABC transporter" evidence="1">
    <location>
        <begin position="8"/>
        <end position="238"/>
    </location>
</feature>
<feature type="binding site" evidence="1">
    <location>
        <begin position="40"/>
        <end position="47"/>
    </location>
    <ligand>
        <name>ATP</name>
        <dbReference type="ChEBI" id="CHEBI:30616"/>
    </ligand>
</feature>
<evidence type="ECO:0000255" key="1">
    <source>
        <dbReference type="HAMAP-Rule" id="MF_01726"/>
    </source>
</evidence>
<proteinExistence type="inferred from homology"/>
<gene>
    <name evidence="1" type="primary">potA</name>
    <name type="ordered locus">LI0829</name>
</gene>
<keyword id="KW-0067">ATP-binding</keyword>
<keyword id="KW-1003">Cell membrane</keyword>
<keyword id="KW-0472">Membrane</keyword>
<keyword id="KW-0547">Nucleotide-binding</keyword>
<keyword id="KW-1185">Reference proteome</keyword>
<keyword id="KW-1278">Translocase</keyword>
<keyword id="KW-0813">Transport</keyword>